<organism>
    <name type="scientific">Rickettsia akari (strain Hartford)</name>
    <dbReference type="NCBI Taxonomy" id="293614"/>
    <lineage>
        <taxon>Bacteria</taxon>
        <taxon>Pseudomonadati</taxon>
        <taxon>Pseudomonadota</taxon>
        <taxon>Alphaproteobacteria</taxon>
        <taxon>Rickettsiales</taxon>
        <taxon>Rickettsiaceae</taxon>
        <taxon>Rickettsieae</taxon>
        <taxon>Rickettsia</taxon>
        <taxon>spotted fever group</taxon>
    </lineage>
</organism>
<gene>
    <name evidence="1" type="primary">dnaA</name>
    <name type="ordered locus">A1C_04690</name>
</gene>
<comment type="function">
    <text evidence="1">Plays an essential role in the initiation and regulation of chromosomal replication. ATP-DnaA binds to the origin of replication (oriC) to initiate formation of the DNA replication initiation complex once per cell cycle. Binds the DnaA box (a 9 base pair repeat at the origin) and separates the double-stranded (ds)DNA. Forms a right-handed helical filament on oriC DNA; dsDNA binds to the exterior of the filament while single-stranded (ss)DNA is stabiized in the filament's interior. The ATP-DnaA-oriC complex binds and stabilizes one strand of the AT-rich DNA unwinding element (DUE), permitting loading of DNA polymerase. After initiation quickly degrades to an ADP-DnaA complex that is not apt for DNA replication. Binds acidic phospholipids.</text>
</comment>
<comment type="subunit">
    <text evidence="1">Oligomerizes as a right-handed, spiral filament on DNA at oriC.</text>
</comment>
<comment type="subcellular location">
    <subcellularLocation>
        <location evidence="1">Cytoplasm</location>
    </subcellularLocation>
</comment>
<comment type="domain">
    <text evidence="1">Domain I is involved in oligomerization and binding regulators, domain II is flexibile and of varying length in different bacteria, domain III forms the AAA+ region, while domain IV binds dsDNA.</text>
</comment>
<comment type="similarity">
    <text evidence="1">Belongs to the DnaA family.</text>
</comment>
<sequence>MNTNQIILTDQGDNYVNLWSHVAQDLYNHYGETLYNSWFSKVNFIESSLNTVILCAPTNFVRDWIKSKYSMVILQLFQHYNNTIKSIDIITKELPGTTQTVIELPTKTFADIGSSELNSENIFSTLDVRFTFDNFVVGAPNELAYAAARAVAESSGAVSESNPLFLYGGVGLGKTHLMHAIGWYIKQNNPSRKVIYMSAEKFMYQFVKALRNKEVILFKEKFRSVDVLMIDDIQFICGKDSTQEEFFHTFNTLIDNNRQMVISCDRSPSDLDNIEDRIKSRLGWGLVADVHSTTYELRLGILESKIEQMNVKIPKDVIDFLASKIVSNVRELEGALNKVIAHSNFTLKEITLENTQNILRDLLRSNERIITVEDIQKKVASRYNIKLSDMSSSRRLREVARPRQIAMYLSKALTLKSLADIGKKFGKKDHTTVMYAIKKVEELLENDIELREEINLLMKILQH</sequence>
<feature type="chain" id="PRO_1000048709" description="Chromosomal replication initiator protein DnaA">
    <location>
        <begin position="1"/>
        <end position="463"/>
    </location>
</feature>
<feature type="region of interest" description="Domain I, interacts with DnaA modulators" evidence="1">
    <location>
        <begin position="1"/>
        <end position="83"/>
    </location>
</feature>
<feature type="region of interest" description="Domain II" evidence="1">
    <location>
        <begin position="83"/>
        <end position="124"/>
    </location>
</feature>
<feature type="region of interest" description="Domain III, AAA+ region" evidence="1">
    <location>
        <begin position="125"/>
        <end position="343"/>
    </location>
</feature>
<feature type="region of interest" description="Domain IV, binds dsDNA" evidence="1">
    <location>
        <begin position="344"/>
        <end position="463"/>
    </location>
</feature>
<feature type="binding site" evidence="1">
    <location>
        <position position="171"/>
    </location>
    <ligand>
        <name>ATP</name>
        <dbReference type="ChEBI" id="CHEBI:30616"/>
    </ligand>
</feature>
<feature type="binding site" evidence="1">
    <location>
        <position position="173"/>
    </location>
    <ligand>
        <name>ATP</name>
        <dbReference type="ChEBI" id="CHEBI:30616"/>
    </ligand>
</feature>
<feature type="binding site" evidence="1">
    <location>
        <position position="174"/>
    </location>
    <ligand>
        <name>ATP</name>
        <dbReference type="ChEBI" id="CHEBI:30616"/>
    </ligand>
</feature>
<feature type="binding site" evidence="1">
    <location>
        <position position="175"/>
    </location>
    <ligand>
        <name>ATP</name>
        <dbReference type="ChEBI" id="CHEBI:30616"/>
    </ligand>
</feature>
<name>DNAA_RICAH</name>
<proteinExistence type="inferred from homology"/>
<reference key="1">
    <citation type="submission" date="2007-09" db="EMBL/GenBank/DDBJ databases">
        <title>Complete genome sequence of Rickettsia akari.</title>
        <authorList>
            <person name="Madan A."/>
            <person name="Fahey J."/>
            <person name="Helton E."/>
            <person name="Ketteman M."/>
            <person name="Madan A."/>
            <person name="Rodrigues S."/>
            <person name="Sanchez A."/>
            <person name="Whiting M."/>
            <person name="Dasch G."/>
            <person name="Eremeeva M."/>
        </authorList>
    </citation>
    <scope>NUCLEOTIDE SEQUENCE [LARGE SCALE GENOMIC DNA]</scope>
    <source>
        <strain>Hartford</strain>
    </source>
</reference>
<protein>
    <recommendedName>
        <fullName evidence="1">Chromosomal replication initiator protein DnaA</fullName>
    </recommendedName>
</protein>
<evidence type="ECO:0000255" key="1">
    <source>
        <dbReference type="HAMAP-Rule" id="MF_00377"/>
    </source>
</evidence>
<accession>A8GP75</accession>
<dbReference type="EMBL" id="CP000847">
    <property type="protein sequence ID" value="ABV75200.1"/>
    <property type="molecule type" value="Genomic_DNA"/>
</dbReference>
<dbReference type="RefSeq" id="WP_012149830.1">
    <property type="nucleotide sequence ID" value="NC_009881.1"/>
</dbReference>
<dbReference type="SMR" id="A8GP75"/>
<dbReference type="STRING" id="293614.A1C_04690"/>
<dbReference type="KEGG" id="rak:A1C_04690"/>
<dbReference type="eggNOG" id="COG0593">
    <property type="taxonomic scope" value="Bacteria"/>
</dbReference>
<dbReference type="HOGENOM" id="CLU_026910_3_0_5"/>
<dbReference type="Proteomes" id="UP000006830">
    <property type="component" value="Chromosome"/>
</dbReference>
<dbReference type="GO" id="GO:0005737">
    <property type="term" value="C:cytoplasm"/>
    <property type="evidence" value="ECO:0007669"/>
    <property type="project" value="UniProtKB-SubCell"/>
</dbReference>
<dbReference type="GO" id="GO:0005886">
    <property type="term" value="C:plasma membrane"/>
    <property type="evidence" value="ECO:0007669"/>
    <property type="project" value="TreeGrafter"/>
</dbReference>
<dbReference type="GO" id="GO:0005524">
    <property type="term" value="F:ATP binding"/>
    <property type="evidence" value="ECO:0007669"/>
    <property type="project" value="UniProtKB-UniRule"/>
</dbReference>
<dbReference type="GO" id="GO:0016887">
    <property type="term" value="F:ATP hydrolysis activity"/>
    <property type="evidence" value="ECO:0007669"/>
    <property type="project" value="InterPro"/>
</dbReference>
<dbReference type="GO" id="GO:0003688">
    <property type="term" value="F:DNA replication origin binding"/>
    <property type="evidence" value="ECO:0007669"/>
    <property type="project" value="UniProtKB-UniRule"/>
</dbReference>
<dbReference type="GO" id="GO:0008289">
    <property type="term" value="F:lipid binding"/>
    <property type="evidence" value="ECO:0007669"/>
    <property type="project" value="UniProtKB-KW"/>
</dbReference>
<dbReference type="GO" id="GO:0006270">
    <property type="term" value="P:DNA replication initiation"/>
    <property type="evidence" value="ECO:0007669"/>
    <property type="project" value="UniProtKB-UniRule"/>
</dbReference>
<dbReference type="GO" id="GO:0006275">
    <property type="term" value="P:regulation of DNA replication"/>
    <property type="evidence" value="ECO:0007669"/>
    <property type="project" value="UniProtKB-UniRule"/>
</dbReference>
<dbReference type="CDD" id="cd00009">
    <property type="entry name" value="AAA"/>
    <property type="match status" value="1"/>
</dbReference>
<dbReference type="CDD" id="cd06571">
    <property type="entry name" value="Bac_DnaA_C"/>
    <property type="match status" value="1"/>
</dbReference>
<dbReference type="FunFam" id="3.40.50.300:FF:000668">
    <property type="entry name" value="Chromosomal replication initiator protein DnaA"/>
    <property type="match status" value="1"/>
</dbReference>
<dbReference type="Gene3D" id="1.10.1750.10">
    <property type="match status" value="1"/>
</dbReference>
<dbReference type="Gene3D" id="1.10.8.60">
    <property type="match status" value="1"/>
</dbReference>
<dbReference type="Gene3D" id="3.30.300.180">
    <property type="match status" value="1"/>
</dbReference>
<dbReference type="Gene3D" id="3.40.50.300">
    <property type="entry name" value="P-loop containing nucleotide triphosphate hydrolases"/>
    <property type="match status" value="1"/>
</dbReference>
<dbReference type="HAMAP" id="MF_00377">
    <property type="entry name" value="DnaA_bact"/>
    <property type="match status" value="1"/>
</dbReference>
<dbReference type="InterPro" id="IPR003593">
    <property type="entry name" value="AAA+_ATPase"/>
</dbReference>
<dbReference type="InterPro" id="IPR001957">
    <property type="entry name" value="Chromosome_initiator_DnaA"/>
</dbReference>
<dbReference type="InterPro" id="IPR020591">
    <property type="entry name" value="Chromosome_initiator_DnaA-like"/>
</dbReference>
<dbReference type="InterPro" id="IPR018312">
    <property type="entry name" value="Chromosome_initiator_DnaA_CS"/>
</dbReference>
<dbReference type="InterPro" id="IPR013159">
    <property type="entry name" value="DnaA_C"/>
</dbReference>
<dbReference type="InterPro" id="IPR013317">
    <property type="entry name" value="DnaA_dom"/>
</dbReference>
<dbReference type="InterPro" id="IPR024633">
    <property type="entry name" value="DnaA_N_dom"/>
</dbReference>
<dbReference type="InterPro" id="IPR038454">
    <property type="entry name" value="DnaA_N_sf"/>
</dbReference>
<dbReference type="InterPro" id="IPR027417">
    <property type="entry name" value="P-loop_NTPase"/>
</dbReference>
<dbReference type="InterPro" id="IPR010921">
    <property type="entry name" value="Trp_repressor/repl_initiator"/>
</dbReference>
<dbReference type="NCBIfam" id="TIGR00362">
    <property type="entry name" value="DnaA"/>
    <property type="match status" value="1"/>
</dbReference>
<dbReference type="PANTHER" id="PTHR30050">
    <property type="entry name" value="CHROMOSOMAL REPLICATION INITIATOR PROTEIN DNAA"/>
    <property type="match status" value="1"/>
</dbReference>
<dbReference type="PANTHER" id="PTHR30050:SF2">
    <property type="entry name" value="CHROMOSOMAL REPLICATION INITIATOR PROTEIN DNAA"/>
    <property type="match status" value="1"/>
</dbReference>
<dbReference type="Pfam" id="PF00308">
    <property type="entry name" value="Bac_DnaA"/>
    <property type="match status" value="1"/>
</dbReference>
<dbReference type="Pfam" id="PF08299">
    <property type="entry name" value="Bac_DnaA_C"/>
    <property type="match status" value="1"/>
</dbReference>
<dbReference type="Pfam" id="PF11638">
    <property type="entry name" value="DnaA_N"/>
    <property type="match status" value="1"/>
</dbReference>
<dbReference type="PRINTS" id="PR00051">
    <property type="entry name" value="DNAA"/>
</dbReference>
<dbReference type="SMART" id="SM00382">
    <property type="entry name" value="AAA"/>
    <property type="match status" value="1"/>
</dbReference>
<dbReference type="SMART" id="SM00760">
    <property type="entry name" value="Bac_DnaA_C"/>
    <property type="match status" value="1"/>
</dbReference>
<dbReference type="SUPFAM" id="SSF52540">
    <property type="entry name" value="P-loop containing nucleoside triphosphate hydrolases"/>
    <property type="match status" value="1"/>
</dbReference>
<dbReference type="SUPFAM" id="SSF48295">
    <property type="entry name" value="TrpR-like"/>
    <property type="match status" value="1"/>
</dbReference>
<dbReference type="PROSITE" id="PS01008">
    <property type="entry name" value="DNAA"/>
    <property type="match status" value="1"/>
</dbReference>
<keyword id="KW-0067">ATP-binding</keyword>
<keyword id="KW-0963">Cytoplasm</keyword>
<keyword id="KW-0235">DNA replication</keyword>
<keyword id="KW-0238">DNA-binding</keyword>
<keyword id="KW-0446">Lipid-binding</keyword>
<keyword id="KW-0547">Nucleotide-binding</keyword>